<evidence type="ECO:0000255" key="1">
    <source>
        <dbReference type="HAMAP-Rule" id="MF_01689"/>
    </source>
</evidence>
<evidence type="ECO:0000305" key="2"/>
<sequence>MQSSTSAVIEKTEKYGAKNYHPLPIVISEAKGVWVKDPEGRKYLDMLSAYSAVNQGHCHPKIIQALKDQADKITLTSRAFHNDQLAPFYEKVSKLTGKNMLLPMNTGAEAVETAVKAARRWAYDVKGVPDNQAEIIVCEDNFHGRTMTAVSLSSNDEYKRGFGPMLPGIKVIPYGDLEALKAAITSHTAAFLVEPIQGEAGIRIPQEGFLKEAYALCKRENVLFIADEIQSGLGRSGKWFACDWEDVKPDMYILGKALGGGVFPISVVCADRDILGVFEPGSHGSTFGGNPLACAVSIAALEVLEEEKLVERSYEYGNYLLTKLKEIDNPIIKDVRGRGLFIGVELHEPARKYCEQLKEEGLLCKETHETVIRFAPPLVISKEDLDWAIEKIYYVLKP</sequence>
<keyword id="KW-0028">Amino-acid biosynthesis</keyword>
<keyword id="KW-0032">Aminotransferase</keyword>
<keyword id="KW-0963">Cytoplasm</keyword>
<keyword id="KW-0641">Proline biosynthesis</keyword>
<keyword id="KW-0663">Pyridoxal phosphate</keyword>
<keyword id="KW-1185">Reference proteome</keyword>
<keyword id="KW-0808">Transferase</keyword>
<gene>
    <name evidence="1" type="primary">rocD</name>
    <name type="ordered locus">BH3943</name>
</gene>
<organism>
    <name type="scientific">Halalkalibacterium halodurans (strain ATCC BAA-125 / DSM 18197 / FERM 7344 / JCM 9153 / C-125)</name>
    <name type="common">Bacillus halodurans</name>
    <dbReference type="NCBI Taxonomy" id="272558"/>
    <lineage>
        <taxon>Bacteria</taxon>
        <taxon>Bacillati</taxon>
        <taxon>Bacillota</taxon>
        <taxon>Bacilli</taxon>
        <taxon>Bacillales</taxon>
        <taxon>Bacillaceae</taxon>
        <taxon>Halalkalibacterium (ex Joshi et al. 2022)</taxon>
    </lineage>
</organism>
<proteinExistence type="inferred from homology"/>
<comment type="function">
    <text evidence="1">Catalyzes the interconversion of ornithine to glutamate semialdehyde.</text>
</comment>
<comment type="catalytic activity">
    <reaction evidence="1">
        <text>a 2-oxocarboxylate + L-ornithine = L-glutamate 5-semialdehyde + an L-alpha-amino acid</text>
        <dbReference type="Rhea" id="RHEA:13877"/>
        <dbReference type="ChEBI" id="CHEBI:35179"/>
        <dbReference type="ChEBI" id="CHEBI:46911"/>
        <dbReference type="ChEBI" id="CHEBI:58066"/>
        <dbReference type="ChEBI" id="CHEBI:59869"/>
        <dbReference type="EC" id="2.6.1.13"/>
    </reaction>
</comment>
<comment type="cofactor">
    <cofactor evidence="1">
        <name>pyridoxal 5'-phosphate</name>
        <dbReference type="ChEBI" id="CHEBI:597326"/>
    </cofactor>
</comment>
<comment type="pathway">
    <text evidence="1">Amino-acid biosynthesis; L-proline biosynthesis; L-glutamate 5-semialdehyde from L-ornithine: step 1/1.</text>
</comment>
<comment type="subcellular location">
    <subcellularLocation>
        <location evidence="1">Cytoplasm</location>
    </subcellularLocation>
</comment>
<comment type="similarity">
    <text evidence="1">Belongs to the class-III pyridoxal-phosphate-dependent aminotransferase family. OAT subfamily.</text>
</comment>
<comment type="sequence caution" evidence="2">
    <conflict type="erroneous initiation">
        <sequence resource="EMBL-CDS" id="BAB07662"/>
    </conflict>
</comment>
<protein>
    <recommendedName>
        <fullName evidence="1">Ornithine aminotransferase</fullName>
        <shortName evidence="1">OAT</shortName>
        <ecNumber evidence="1">2.6.1.13</ecNumber>
    </recommendedName>
    <alternativeName>
        <fullName evidence="1">Ornithine--oxo-acid aminotransferase</fullName>
    </alternativeName>
</protein>
<name>OAT_HALH5</name>
<feature type="chain" id="PRO_0000120502" description="Ornithine aminotransferase">
    <location>
        <begin position="1"/>
        <end position="398"/>
    </location>
</feature>
<feature type="modified residue" description="N6-(pyridoxal phosphate)lysine" evidence="1">
    <location>
        <position position="256"/>
    </location>
</feature>
<reference key="1">
    <citation type="journal article" date="2000" name="Nucleic Acids Res.">
        <title>Complete genome sequence of the alkaliphilic bacterium Bacillus halodurans and genomic sequence comparison with Bacillus subtilis.</title>
        <authorList>
            <person name="Takami H."/>
            <person name="Nakasone K."/>
            <person name="Takaki Y."/>
            <person name="Maeno G."/>
            <person name="Sasaki R."/>
            <person name="Masui N."/>
            <person name="Fuji F."/>
            <person name="Hirama C."/>
            <person name="Nakamura Y."/>
            <person name="Ogasawara N."/>
            <person name="Kuhara S."/>
            <person name="Horikoshi K."/>
        </authorList>
    </citation>
    <scope>NUCLEOTIDE SEQUENCE [LARGE SCALE GENOMIC DNA]</scope>
    <source>
        <strain>ATCC BAA-125 / DSM 18197 / FERM 7344 / JCM 9153 / C-125</strain>
    </source>
</reference>
<accession>Q9K5Z2</accession>
<dbReference type="EC" id="2.6.1.13" evidence="1"/>
<dbReference type="EMBL" id="BA000004">
    <property type="protein sequence ID" value="BAB07662.1"/>
    <property type="status" value="ALT_INIT"/>
    <property type="molecule type" value="Genomic_DNA"/>
</dbReference>
<dbReference type="PIR" id="G84142">
    <property type="entry name" value="G84142"/>
</dbReference>
<dbReference type="RefSeq" id="WP_143705088.1">
    <property type="nucleotide sequence ID" value="NC_002570.2"/>
</dbReference>
<dbReference type="SMR" id="Q9K5Z2"/>
<dbReference type="STRING" id="272558.gene:10729856"/>
<dbReference type="KEGG" id="bha:BH3943"/>
<dbReference type="eggNOG" id="COG4992">
    <property type="taxonomic scope" value="Bacteria"/>
</dbReference>
<dbReference type="HOGENOM" id="CLU_016922_10_3_9"/>
<dbReference type="OrthoDB" id="9807885at2"/>
<dbReference type="UniPathway" id="UPA00098">
    <property type="reaction ID" value="UER00358"/>
</dbReference>
<dbReference type="Proteomes" id="UP000001258">
    <property type="component" value="Chromosome"/>
</dbReference>
<dbReference type="GO" id="GO:0005737">
    <property type="term" value="C:cytoplasm"/>
    <property type="evidence" value="ECO:0007669"/>
    <property type="project" value="UniProtKB-SubCell"/>
</dbReference>
<dbReference type="GO" id="GO:0042802">
    <property type="term" value="F:identical protein binding"/>
    <property type="evidence" value="ECO:0007669"/>
    <property type="project" value="TreeGrafter"/>
</dbReference>
<dbReference type="GO" id="GO:0004587">
    <property type="term" value="F:ornithine aminotransferase activity"/>
    <property type="evidence" value="ECO:0007669"/>
    <property type="project" value="UniProtKB-UniRule"/>
</dbReference>
<dbReference type="GO" id="GO:0030170">
    <property type="term" value="F:pyridoxal phosphate binding"/>
    <property type="evidence" value="ECO:0007669"/>
    <property type="project" value="UniProtKB-UniRule"/>
</dbReference>
<dbReference type="GO" id="GO:0055129">
    <property type="term" value="P:L-proline biosynthetic process"/>
    <property type="evidence" value="ECO:0007669"/>
    <property type="project" value="UniProtKB-UniRule"/>
</dbReference>
<dbReference type="CDD" id="cd00610">
    <property type="entry name" value="OAT_like"/>
    <property type="match status" value="1"/>
</dbReference>
<dbReference type="FunFam" id="3.40.640.10:FF:000011">
    <property type="entry name" value="Ornithine aminotransferase"/>
    <property type="match status" value="1"/>
</dbReference>
<dbReference type="Gene3D" id="3.90.1150.10">
    <property type="entry name" value="Aspartate Aminotransferase, domain 1"/>
    <property type="match status" value="1"/>
</dbReference>
<dbReference type="Gene3D" id="3.40.640.10">
    <property type="entry name" value="Type I PLP-dependent aspartate aminotransferase-like (Major domain)"/>
    <property type="match status" value="1"/>
</dbReference>
<dbReference type="HAMAP" id="MF_01689">
    <property type="entry name" value="Ornith_aminotrans_3"/>
    <property type="match status" value="1"/>
</dbReference>
<dbReference type="InterPro" id="IPR005814">
    <property type="entry name" value="Aminotrans_3"/>
</dbReference>
<dbReference type="InterPro" id="IPR049704">
    <property type="entry name" value="Aminotrans_3_PPA_site"/>
</dbReference>
<dbReference type="InterPro" id="IPR050103">
    <property type="entry name" value="Class-III_PLP-dep_AT"/>
</dbReference>
<dbReference type="InterPro" id="IPR010164">
    <property type="entry name" value="Orn_aminotrans"/>
</dbReference>
<dbReference type="InterPro" id="IPR034757">
    <property type="entry name" value="Ornith_aminotrans_bact"/>
</dbReference>
<dbReference type="InterPro" id="IPR015424">
    <property type="entry name" value="PyrdxlP-dep_Trfase"/>
</dbReference>
<dbReference type="InterPro" id="IPR015421">
    <property type="entry name" value="PyrdxlP-dep_Trfase_major"/>
</dbReference>
<dbReference type="InterPro" id="IPR015422">
    <property type="entry name" value="PyrdxlP-dep_Trfase_small"/>
</dbReference>
<dbReference type="NCBIfam" id="TIGR01885">
    <property type="entry name" value="Orn_aminotrans"/>
    <property type="match status" value="1"/>
</dbReference>
<dbReference type="NCBIfam" id="NF003145">
    <property type="entry name" value="PRK04073.1"/>
    <property type="match status" value="1"/>
</dbReference>
<dbReference type="PANTHER" id="PTHR11986">
    <property type="entry name" value="AMINOTRANSFERASE CLASS III"/>
    <property type="match status" value="1"/>
</dbReference>
<dbReference type="PANTHER" id="PTHR11986:SF18">
    <property type="entry name" value="ORNITHINE AMINOTRANSFERASE, MITOCHONDRIAL"/>
    <property type="match status" value="1"/>
</dbReference>
<dbReference type="Pfam" id="PF00202">
    <property type="entry name" value="Aminotran_3"/>
    <property type="match status" value="1"/>
</dbReference>
<dbReference type="PIRSF" id="PIRSF000521">
    <property type="entry name" value="Transaminase_4ab_Lys_Orn"/>
    <property type="match status" value="1"/>
</dbReference>
<dbReference type="SUPFAM" id="SSF53383">
    <property type="entry name" value="PLP-dependent transferases"/>
    <property type="match status" value="1"/>
</dbReference>
<dbReference type="PROSITE" id="PS00600">
    <property type="entry name" value="AA_TRANSFER_CLASS_3"/>
    <property type="match status" value="1"/>
</dbReference>